<reference evidence="5" key="1">
    <citation type="journal article" date="2013" name="Biochimie">
        <title>Identification of multiple antimicrobial peptides from the skin of fine-spined frog, Hylarana spinulosa (Ranidae).</title>
        <authorList>
            <person name="Yang X."/>
            <person name="Hu Y."/>
            <person name="Xu S."/>
            <person name="Hu Y."/>
            <person name="Meng H."/>
            <person name="Guo C."/>
            <person name="Liu Y."/>
            <person name="Liu J."/>
            <person name="Yu Z."/>
            <person name="Wang H."/>
        </authorList>
    </citation>
    <scope>NUCLEOTIDE SEQUENCE [MRNA]</scope>
    <scope>FUNCTION</scope>
    <scope>SYNTHESIS</scope>
    <source>
        <tissue evidence="3">Skin</tissue>
    </source>
</reference>
<organism evidence="3">
    <name type="scientific">Sylvirana spinulosa</name>
    <name type="common">Fine-spined frog</name>
    <name type="synonym">Hylarana spinulosa</name>
    <dbReference type="NCBI Taxonomy" id="369515"/>
    <lineage>
        <taxon>Eukaryota</taxon>
        <taxon>Metazoa</taxon>
        <taxon>Chordata</taxon>
        <taxon>Craniata</taxon>
        <taxon>Vertebrata</taxon>
        <taxon>Euteleostomi</taxon>
        <taxon>Amphibia</taxon>
        <taxon>Batrachia</taxon>
        <taxon>Anura</taxon>
        <taxon>Neobatrachia</taxon>
        <taxon>Ranoidea</taxon>
        <taxon>Ranidae</taxon>
        <taxon>Sylvirana</taxon>
    </lineage>
</organism>
<dbReference type="EMBL" id="HQ735153">
    <property type="protein sequence ID" value="ADV36176.1"/>
    <property type="molecule type" value="mRNA"/>
</dbReference>
<dbReference type="GO" id="GO:0005576">
    <property type="term" value="C:extracellular region"/>
    <property type="evidence" value="ECO:0007669"/>
    <property type="project" value="UniProtKB-SubCell"/>
</dbReference>
<dbReference type="GO" id="GO:0050832">
    <property type="term" value="P:defense response to fungus"/>
    <property type="evidence" value="ECO:0000314"/>
    <property type="project" value="UniProtKB"/>
</dbReference>
<dbReference type="GO" id="GO:0050829">
    <property type="term" value="P:defense response to Gram-negative bacterium"/>
    <property type="evidence" value="ECO:0000314"/>
    <property type="project" value="UniProtKB"/>
</dbReference>
<dbReference type="GO" id="GO:0050830">
    <property type="term" value="P:defense response to Gram-positive bacterium"/>
    <property type="evidence" value="ECO:0000314"/>
    <property type="project" value="UniProtKB"/>
</dbReference>
<dbReference type="GO" id="GO:0044179">
    <property type="term" value="P:hemolysis in another organism"/>
    <property type="evidence" value="ECO:0000314"/>
    <property type="project" value="UniProtKB"/>
</dbReference>
<dbReference type="InterPro" id="IPR004275">
    <property type="entry name" value="Frog_antimicrobial_propeptide"/>
</dbReference>
<dbReference type="Pfam" id="PF03032">
    <property type="entry name" value="FSAP_sig_propep"/>
    <property type="match status" value="1"/>
</dbReference>
<accession>E7EKH6</accession>
<protein>
    <recommendedName>
        <fullName evidence="3">Brevinin-2SN3</fullName>
    </recommendedName>
</protein>
<evidence type="ECO:0000255" key="1"/>
<evidence type="ECO:0000269" key="2">
    <source>
    </source>
</evidence>
<evidence type="ECO:0000303" key="3">
    <source>
    </source>
</evidence>
<evidence type="ECO:0000305" key="4">
    <source>
    </source>
</evidence>
<evidence type="ECO:0000312" key="5">
    <source>
        <dbReference type="EMBL" id="ADV36176.1"/>
    </source>
</evidence>
<comment type="function">
    <text evidence="2">Antimicrobial peptide. Active against a variety of Gram-negative and Gram-positive bacterial strains. Active against fungus C.glabrata 090902 but not against C.albicans ATCC 10231. Shows hemolytic activity against human erythrocytes.</text>
</comment>
<comment type="subcellular location">
    <subcellularLocation>
        <location evidence="4">Secreted</location>
    </subcellularLocation>
</comment>
<comment type="tissue specificity">
    <text evidence="4">Expressed by the skin glands.</text>
</comment>
<comment type="similarity">
    <text evidence="1">Belongs to the frog skin active peptide (FSAP) family. Brevinin subfamily.</text>
</comment>
<proteinExistence type="inferred from homology"/>
<name>B2SN3_SYLSP</name>
<keyword id="KW-0878">Amphibian defense peptide</keyword>
<keyword id="KW-0044">Antibiotic</keyword>
<keyword id="KW-0929">Antimicrobial</keyword>
<keyword id="KW-0165">Cleavage on pair of basic residues</keyword>
<keyword id="KW-0204">Cytolysis</keyword>
<keyword id="KW-1015">Disulfide bond</keyword>
<keyword id="KW-0295">Fungicide</keyword>
<keyword id="KW-0354">Hemolysis</keyword>
<keyword id="KW-0964">Secreted</keyword>
<keyword id="KW-0732">Signal</keyword>
<feature type="signal peptide" evidence="1">
    <location>
        <begin position="1"/>
        <end position="22"/>
    </location>
</feature>
<feature type="propeptide" id="PRO_0000439778" description="Removed in mature form" evidence="4">
    <location>
        <begin position="23"/>
        <end position="40"/>
    </location>
</feature>
<feature type="peptide" id="PRO_0000439779" description="Brevinin-2SN3" evidence="3">
    <location>
        <begin position="43"/>
        <end position="72"/>
    </location>
</feature>
<feature type="disulfide bond" evidence="3">
    <location>
        <begin position="66"/>
        <end position="72"/>
    </location>
</feature>
<sequence length="72" mass="7732">MFTLKKPLLLLVFLGMISLSLCQDERGADEDDGGEMTEEEKRGAFGNLLKGVAKKAGLKILSIAQCKLSGTC</sequence>